<sequence length="181" mass="19614">MESGFKVTLKDAIRTIPDYPKPGVQFRDVTTLMGNAQAFRRAVDELVYPYAGNRIDKVAGIEARGFILGGAIAHQLSAGFVPIRKKGKLPRDTVRIAYSLEYGVDEMEMHRDAIEKGERVVLVDDLIATGGTAEAAAKLLLQMGAEIVAACFIIDLPDLGGRKKLEALGLPVRTLVAFEGD</sequence>
<comment type="function">
    <text evidence="1">Catalyzes a salvage reaction resulting in the formation of AMP, that is energically less costly than de novo synthesis.</text>
</comment>
<comment type="catalytic activity">
    <reaction evidence="1">
        <text>AMP + diphosphate = 5-phospho-alpha-D-ribose 1-diphosphate + adenine</text>
        <dbReference type="Rhea" id="RHEA:16609"/>
        <dbReference type="ChEBI" id="CHEBI:16708"/>
        <dbReference type="ChEBI" id="CHEBI:33019"/>
        <dbReference type="ChEBI" id="CHEBI:58017"/>
        <dbReference type="ChEBI" id="CHEBI:456215"/>
        <dbReference type="EC" id="2.4.2.7"/>
    </reaction>
</comment>
<comment type="pathway">
    <text evidence="1">Purine metabolism; AMP biosynthesis via salvage pathway; AMP from adenine: step 1/1.</text>
</comment>
<comment type="subunit">
    <text evidence="1">Homodimer.</text>
</comment>
<comment type="subcellular location">
    <subcellularLocation>
        <location evidence="1">Cytoplasm</location>
    </subcellularLocation>
</comment>
<comment type="similarity">
    <text evidence="1">Belongs to the purine/pyrimidine phosphoribosyltransferase family.</text>
</comment>
<comment type="sequence caution" evidence="2">
    <conflict type="erroneous initiation">
        <sequence resource="EMBL-CDS" id="ABX62601"/>
    </conflict>
</comment>
<reference key="1">
    <citation type="submission" date="2007-10" db="EMBL/GenBank/DDBJ databases">
        <title>Brucella canis ATCC 23365 whole genome shotgun sequencing project.</title>
        <authorList>
            <person name="Setubal J.C."/>
            <person name="Bowns C."/>
            <person name="Boyle S."/>
            <person name="Crasta O.R."/>
            <person name="Czar M.J."/>
            <person name="Dharmanolla C."/>
            <person name="Gillespie J.J."/>
            <person name="Kenyon R.W."/>
            <person name="Lu J."/>
            <person name="Mane S."/>
            <person name="Mohapatra S."/>
            <person name="Nagrani S."/>
            <person name="Purkayastha A."/>
            <person name="Rajasimha H.K."/>
            <person name="Shallom J.M."/>
            <person name="Shallom S."/>
            <person name="Shukla M."/>
            <person name="Snyder E.E."/>
            <person name="Sobral B.W."/>
            <person name="Wattam A.R."/>
            <person name="Will R."/>
            <person name="Williams K."/>
            <person name="Yoo H."/>
            <person name="Bruce D."/>
            <person name="Detter C."/>
            <person name="Munk C."/>
            <person name="Brettin T.S."/>
        </authorList>
    </citation>
    <scope>NUCLEOTIDE SEQUENCE [LARGE SCALE GENOMIC DNA]</scope>
    <source>
        <strain>ATCC 23365 / NCTC 10854 / RM-666</strain>
    </source>
</reference>
<feature type="chain" id="PRO_0000334710" description="Adenine phosphoribosyltransferase">
    <location>
        <begin position="1"/>
        <end position="181"/>
    </location>
</feature>
<organism>
    <name type="scientific">Brucella canis (strain ATCC 23365 / NCTC 10854 / RM-666)</name>
    <dbReference type="NCBI Taxonomy" id="483179"/>
    <lineage>
        <taxon>Bacteria</taxon>
        <taxon>Pseudomonadati</taxon>
        <taxon>Pseudomonadota</taxon>
        <taxon>Alphaproteobacteria</taxon>
        <taxon>Hyphomicrobiales</taxon>
        <taxon>Brucellaceae</taxon>
        <taxon>Brucella/Ochrobactrum group</taxon>
        <taxon>Brucella</taxon>
    </lineage>
</organism>
<proteinExistence type="inferred from homology"/>
<evidence type="ECO:0000255" key="1">
    <source>
        <dbReference type="HAMAP-Rule" id="MF_00004"/>
    </source>
</evidence>
<evidence type="ECO:0000305" key="2"/>
<dbReference type="EC" id="2.4.2.7" evidence="1"/>
<dbReference type="EMBL" id="CP000872">
    <property type="protein sequence ID" value="ABX62601.1"/>
    <property type="status" value="ALT_INIT"/>
    <property type="molecule type" value="Genomic_DNA"/>
</dbReference>
<dbReference type="RefSeq" id="WP_002964645.1">
    <property type="nucleotide sequence ID" value="NC_010103.1"/>
</dbReference>
<dbReference type="SMR" id="A9M6K5"/>
<dbReference type="KEGG" id="bcs:BCAN_A1577"/>
<dbReference type="HOGENOM" id="CLU_063339_3_0_5"/>
<dbReference type="PhylomeDB" id="A9M6K5"/>
<dbReference type="UniPathway" id="UPA00588">
    <property type="reaction ID" value="UER00646"/>
</dbReference>
<dbReference type="Proteomes" id="UP000001385">
    <property type="component" value="Chromosome I"/>
</dbReference>
<dbReference type="GO" id="GO:0005737">
    <property type="term" value="C:cytoplasm"/>
    <property type="evidence" value="ECO:0007669"/>
    <property type="project" value="UniProtKB-SubCell"/>
</dbReference>
<dbReference type="GO" id="GO:0002055">
    <property type="term" value="F:adenine binding"/>
    <property type="evidence" value="ECO:0007669"/>
    <property type="project" value="TreeGrafter"/>
</dbReference>
<dbReference type="GO" id="GO:0003999">
    <property type="term" value="F:adenine phosphoribosyltransferase activity"/>
    <property type="evidence" value="ECO:0007669"/>
    <property type="project" value="UniProtKB-UniRule"/>
</dbReference>
<dbReference type="GO" id="GO:0016208">
    <property type="term" value="F:AMP binding"/>
    <property type="evidence" value="ECO:0007669"/>
    <property type="project" value="TreeGrafter"/>
</dbReference>
<dbReference type="GO" id="GO:0006168">
    <property type="term" value="P:adenine salvage"/>
    <property type="evidence" value="ECO:0007669"/>
    <property type="project" value="InterPro"/>
</dbReference>
<dbReference type="GO" id="GO:0044209">
    <property type="term" value="P:AMP salvage"/>
    <property type="evidence" value="ECO:0007669"/>
    <property type="project" value="UniProtKB-UniRule"/>
</dbReference>
<dbReference type="GO" id="GO:0006166">
    <property type="term" value="P:purine ribonucleoside salvage"/>
    <property type="evidence" value="ECO:0007669"/>
    <property type="project" value="UniProtKB-KW"/>
</dbReference>
<dbReference type="CDD" id="cd06223">
    <property type="entry name" value="PRTases_typeI"/>
    <property type="match status" value="1"/>
</dbReference>
<dbReference type="FunFam" id="3.40.50.2020:FF:000021">
    <property type="entry name" value="Adenine phosphoribosyltransferase"/>
    <property type="match status" value="1"/>
</dbReference>
<dbReference type="Gene3D" id="3.40.50.2020">
    <property type="match status" value="1"/>
</dbReference>
<dbReference type="HAMAP" id="MF_00004">
    <property type="entry name" value="Aden_phosphoribosyltr"/>
    <property type="match status" value="1"/>
</dbReference>
<dbReference type="InterPro" id="IPR005764">
    <property type="entry name" value="Ade_phspho_trans"/>
</dbReference>
<dbReference type="InterPro" id="IPR000836">
    <property type="entry name" value="PRibTrfase_dom"/>
</dbReference>
<dbReference type="InterPro" id="IPR029057">
    <property type="entry name" value="PRTase-like"/>
</dbReference>
<dbReference type="InterPro" id="IPR050054">
    <property type="entry name" value="UPRTase/APRTase"/>
</dbReference>
<dbReference type="NCBIfam" id="TIGR01090">
    <property type="entry name" value="apt"/>
    <property type="match status" value="1"/>
</dbReference>
<dbReference type="NCBIfam" id="NF002634">
    <property type="entry name" value="PRK02304.1-3"/>
    <property type="match status" value="1"/>
</dbReference>
<dbReference type="NCBIfam" id="NF002636">
    <property type="entry name" value="PRK02304.1-5"/>
    <property type="match status" value="1"/>
</dbReference>
<dbReference type="PANTHER" id="PTHR32315">
    <property type="entry name" value="ADENINE PHOSPHORIBOSYLTRANSFERASE"/>
    <property type="match status" value="1"/>
</dbReference>
<dbReference type="PANTHER" id="PTHR32315:SF3">
    <property type="entry name" value="ADENINE PHOSPHORIBOSYLTRANSFERASE"/>
    <property type="match status" value="1"/>
</dbReference>
<dbReference type="Pfam" id="PF00156">
    <property type="entry name" value="Pribosyltran"/>
    <property type="match status" value="1"/>
</dbReference>
<dbReference type="SUPFAM" id="SSF53271">
    <property type="entry name" value="PRTase-like"/>
    <property type="match status" value="1"/>
</dbReference>
<dbReference type="PROSITE" id="PS00103">
    <property type="entry name" value="PUR_PYR_PR_TRANSFER"/>
    <property type="match status" value="1"/>
</dbReference>
<name>APT_BRUC2</name>
<protein>
    <recommendedName>
        <fullName evidence="1">Adenine phosphoribosyltransferase</fullName>
        <shortName evidence="1">APRT</shortName>
        <ecNumber evidence="1">2.4.2.7</ecNumber>
    </recommendedName>
</protein>
<gene>
    <name evidence="1" type="primary">apt</name>
    <name type="ordered locus">BCAN_A1577</name>
</gene>
<accession>A9M6K5</accession>
<keyword id="KW-0963">Cytoplasm</keyword>
<keyword id="KW-0328">Glycosyltransferase</keyword>
<keyword id="KW-0660">Purine salvage</keyword>
<keyword id="KW-1185">Reference proteome</keyword>
<keyword id="KW-0808">Transferase</keyword>